<protein>
    <recommendedName>
        <fullName evidence="1">ATP synthase subunit a</fullName>
    </recommendedName>
    <alternativeName>
        <fullName evidence="1">ATP synthase F0 sector subunit a</fullName>
    </alternativeName>
    <alternativeName>
        <fullName evidence="1">F-ATPase subunit 6</fullName>
    </alternativeName>
</protein>
<evidence type="ECO:0000255" key="1">
    <source>
        <dbReference type="HAMAP-Rule" id="MF_01393"/>
    </source>
</evidence>
<dbReference type="EMBL" id="BA000033">
    <property type="protein sequence ID" value="BAB95898.1"/>
    <property type="molecule type" value="Genomic_DNA"/>
</dbReference>
<dbReference type="RefSeq" id="WP_000349655.1">
    <property type="nucleotide sequence ID" value="NC_003923.1"/>
</dbReference>
<dbReference type="SMR" id="Q7A0C2"/>
<dbReference type="KEGG" id="sam:MW2033"/>
<dbReference type="HOGENOM" id="CLU_041018_2_3_9"/>
<dbReference type="GO" id="GO:0005886">
    <property type="term" value="C:plasma membrane"/>
    <property type="evidence" value="ECO:0007669"/>
    <property type="project" value="UniProtKB-SubCell"/>
</dbReference>
<dbReference type="GO" id="GO:0045259">
    <property type="term" value="C:proton-transporting ATP synthase complex"/>
    <property type="evidence" value="ECO:0007669"/>
    <property type="project" value="UniProtKB-KW"/>
</dbReference>
<dbReference type="GO" id="GO:0046933">
    <property type="term" value="F:proton-transporting ATP synthase activity, rotational mechanism"/>
    <property type="evidence" value="ECO:0007669"/>
    <property type="project" value="UniProtKB-UniRule"/>
</dbReference>
<dbReference type="GO" id="GO:0042777">
    <property type="term" value="P:proton motive force-driven plasma membrane ATP synthesis"/>
    <property type="evidence" value="ECO:0007669"/>
    <property type="project" value="TreeGrafter"/>
</dbReference>
<dbReference type="CDD" id="cd00310">
    <property type="entry name" value="ATP-synt_Fo_a_6"/>
    <property type="match status" value="1"/>
</dbReference>
<dbReference type="FunFam" id="1.20.120.220:FF:000005">
    <property type="entry name" value="ATP synthase subunit a"/>
    <property type="match status" value="1"/>
</dbReference>
<dbReference type="Gene3D" id="1.20.120.220">
    <property type="entry name" value="ATP synthase, F0 complex, subunit A"/>
    <property type="match status" value="1"/>
</dbReference>
<dbReference type="HAMAP" id="MF_01393">
    <property type="entry name" value="ATP_synth_a_bact"/>
    <property type="match status" value="1"/>
</dbReference>
<dbReference type="InterPro" id="IPR045082">
    <property type="entry name" value="ATP_syn_F0_a_bact/chloroplast"/>
</dbReference>
<dbReference type="InterPro" id="IPR000568">
    <property type="entry name" value="ATP_synth_F0_asu"/>
</dbReference>
<dbReference type="InterPro" id="IPR023011">
    <property type="entry name" value="ATP_synth_F0_asu_AS"/>
</dbReference>
<dbReference type="InterPro" id="IPR035908">
    <property type="entry name" value="F0_ATP_A_sf"/>
</dbReference>
<dbReference type="NCBIfam" id="TIGR01131">
    <property type="entry name" value="ATP_synt_6_or_A"/>
    <property type="match status" value="1"/>
</dbReference>
<dbReference type="NCBIfam" id="NF004479">
    <property type="entry name" value="PRK05815.1-4"/>
    <property type="match status" value="1"/>
</dbReference>
<dbReference type="PANTHER" id="PTHR42823">
    <property type="entry name" value="ATP SYNTHASE SUBUNIT A, CHLOROPLASTIC"/>
    <property type="match status" value="1"/>
</dbReference>
<dbReference type="PANTHER" id="PTHR42823:SF3">
    <property type="entry name" value="ATP SYNTHASE SUBUNIT A, CHLOROPLASTIC"/>
    <property type="match status" value="1"/>
</dbReference>
<dbReference type="Pfam" id="PF00119">
    <property type="entry name" value="ATP-synt_A"/>
    <property type="match status" value="1"/>
</dbReference>
<dbReference type="PRINTS" id="PR00123">
    <property type="entry name" value="ATPASEA"/>
</dbReference>
<dbReference type="SUPFAM" id="SSF81336">
    <property type="entry name" value="F1F0 ATP synthase subunit A"/>
    <property type="match status" value="1"/>
</dbReference>
<dbReference type="PROSITE" id="PS00449">
    <property type="entry name" value="ATPASE_A"/>
    <property type="match status" value="1"/>
</dbReference>
<name>ATP6_STAAW</name>
<comment type="function">
    <text evidence="1">Key component of the proton channel; it plays a direct role in the translocation of protons across the membrane.</text>
</comment>
<comment type="subunit">
    <text evidence="1">F-type ATPases have 2 components, CF(1) - the catalytic core - and CF(0) - the membrane proton channel. CF(1) has five subunits: alpha(3), beta(3), gamma(1), delta(1), epsilon(1). CF(0) has three main subunits: a(1), b(2) and c(9-12). The alpha and beta chains form an alternating ring which encloses part of the gamma chain. CF(1) is attached to CF(0) by a central stalk formed by the gamma and epsilon chains, while a peripheral stalk is formed by the delta and b chains.</text>
</comment>
<comment type="subcellular location">
    <subcellularLocation>
        <location evidence="1">Cell membrane</location>
        <topology evidence="1">Multi-pass membrane protein</topology>
    </subcellularLocation>
</comment>
<comment type="similarity">
    <text evidence="1">Belongs to the ATPase A chain family.</text>
</comment>
<feature type="chain" id="PRO_1000145317" description="ATP synthase subunit a">
    <location>
        <begin position="1"/>
        <end position="242"/>
    </location>
</feature>
<feature type="transmembrane region" description="Helical" evidence="1">
    <location>
        <begin position="21"/>
        <end position="41"/>
    </location>
</feature>
<feature type="transmembrane region" description="Helical" evidence="1">
    <location>
        <begin position="83"/>
        <end position="103"/>
    </location>
</feature>
<feature type="transmembrane region" description="Helical" evidence="1">
    <location>
        <begin position="117"/>
        <end position="137"/>
    </location>
</feature>
<feature type="transmembrane region" description="Helical" evidence="1">
    <location>
        <begin position="175"/>
        <end position="195"/>
    </location>
</feature>
<feature type="transmembrane region" description="Helical" evidence="1">
    <location>
        <begin position="198"/>
        <end position="218"/>
    </location>
</feature>
<reference key="1">
    <citation type="journal article" date="2002" name="Lancet">
        <title>Genome and virulence determinants of high virulence community-acquired MRSA.</title>
        <authorList>
            <person name="Baba T."/>
            <person name="Takeuchi F."/>
            <person name="Kuroda M."/>
            <person name="Yuzawa H."/>
            <person name="Aoki K."/>
            <person name="Oguchi A."/>
            <person name="Nagai Y."/>
            <person name="Iwama N."/>
            <person name="Asano K."/>
            <person name="Naimi T."/>
            <person name="Kuroda H."/>
            <person name="Cui L."/>
            <person name="Yamamoto K."/>
            <person name="Hiramatsu K."/>
        </authorList>
    </citation>
    <scope>NUCLEOTIDE SEQUENCE [LARGE SCALE GENOMIC DNA]</scope>
    <source>
        <strain>MW2</strain>
    </source>
</reference>
<proteinExistence type="inferred from homology"/>
<keyword id="KW-0066">ATP synthesis</keyword>
<keyword id="KW-1003">Cell membrane</keyword>
<keyword id="KW-0138">CF(0)</keyword>
<keyword id="KW-0375">Hydrogen ion transport</keyword>
<keyword id="KW-0406">Ion transport</keyword>
<keyword id="KW-0472">Membrane</keyword>
<keyword id="KW-0812">Transmembrane</keyword>
<keyword id="KW-1133">Transmembrane helix</keyword>
<keyword id="KW-0813">Transport</keyword>
<sequence>MDHKSPLVSWNLFGFDIVFNLSSILMILVTAFLVFLLAIICTRNLKKRPTGKQNFVEWIFDFVRGIIEGNMAWKKGGQFHFLAVTLILYIFIANMLGLPFSIVTKDHTLWWKSPTADATVTLTLSTTIILLTHFYGIKMRGTKQYLKGYVQPFWPLAIINVFEEFTSTLTLGLRLYGNIFAGEILLTLLAGLFFNEPAWGWIISIPGLIVWQAFSIFVGTIQAYIFIMLSMVYMSHKVADEH</sequence>
<organism>
    <name type="scientific">Staphylococcus aureus (strain MW2)</name>
    <dbReference type="NCBI Taxonomy" id="196620"/>
    <lineage>
        <taxon>Bacteria</taxon>
        <taxon>Bacillati</taxon>
        <taxon>Bacillota</taxon>
        <taxon>Bacilli</taxon>
        <taxon>Bacillales</taxon>
        <taxon>Staphylococcaceae</taxon>
        <taxon>Staphylococcus</taxon>
    </lineage>
</organism>
<gene>
    <name evidence="1" type="primary">atpB</name>
    <name type="ordered locus">MW2033</name>
</gene>
<accession>Q7A0C2</accession>